<dbReference type="EMBL" id="AB169704">
    <property type="protein sequence ID" value="BAE01785.1"/>
    <property type="molecule type" value="mRNA"/>
</dbReference>
<dbReference type="SMR" id="Q4R540"/>
<dbReference type="STRING" id="9541.ENSMFAP00000011431"/>
<dbReference type="GlyCosmos" id="Q4R540">
    <property type="glycosylation" value="1 site, No reported glycans"/>
</dbReference>
<dbReference type="eggNOG" id="KOG4681">
    <property type="taxonomic scope" value="Eukaryota"/>
</dbReference>
<dbReference type="Proteomes" id="UP000233100">
    <property type="component" value="Unplaced"/>
</dbReference>
<dbReference type="GO" id="GO:0070062">
    <property type="term" value="C:extracellular exosome"/>
    <property type="evidence" value="ECO:0007669"/>
    <property type="project" value="TreeGrafter"/>
</dbReference>
<dbReference type="GO" id="GO:0005794">
    <property type="term" value="C:Golgi apparatus"/>
    <property type="evidence" value="ECO:0007669"/>
    <property type="project" value="TreeGrafter"/>
</dbReference>
<dbReference type="GO" id="GO:0005765">
    <property type="term" value="C:lysosomal membrane"/>
    <property type="evidence" value="ECO:0007669"/>
    <property type="project" value="UniProtKB-SubCell"/>
</dbReference>
<dbReference type="GO" id="GO:0005764">
    <property type="term" value="C:lysosome"/>
    <property type="evidence" value="ECO:0000250"/>
    <property type="project" value="UniProtKB"/>
</dbReference>
<dbReference type="GO" id="GO:0005886">
    <property type="term" value="C:plasma membrane"/>
    <property type="evidence" value="ECO:0000250"/>
    <property type="project" value="UniProtKB"/>
</dbReference>
<dbReference type="GO" id="GO:0001540">
    <property type="term" value="F:amyloid-beta binding"/>
    <property type="evidence" value="ECO:0007669"/>
    <property type="project" value="TreeGrafter"/>
</dbReference>
<dbReference type="GO" id="GO:0042985">
    <property type="term" value="P:negative regulation of amyloid precursor protein biosynthetic process"/>
    <property type="evidence" value="ECO:0007669"/>
    <property type="project" value="TreeGrafter"/>
</dbReference>
<dbReference type="GO" id="GO:0030182">
    <property type="term" value="P:neuron differentiation"/>
    <property type="evidence" value="ECO:0000250"/>
    <property type="project" value="UniProtKB"/>
</dbReference>
<dbReference type="Gene3D" id="3.30.390.150">
    <property type="match status" value="1"/>
</dbReference>
<dbReference type="InterPro" id="IPR007084">
    <property type="entry name" value="BRICHOS_dom"/>
</dbReference>
<dbReference type="InterPro" id="IPR040145">
    <property type="entry name" value="ITM2"/>
</dbReference>
<dbReference type="PANTHER" id="PTHR10962:SF5">
    <property type="entry name" value="INTEGRAL MEMBRANE PROTEIN 2C"/>
    <property type="match status" value="1"/>
</dbReference>
<dbReference type="PANTHER" id="PTHR10962">
    <property type="entry name" value="INTEGRAL TRANSMEMBRANE PROTEIN 2"/>
    <property type="match status" value="1"/>
</dbReference>
<dbReference type="Pfam" id="PF04089">
    <property type="entry name" value="BRICHOS"/>
    <property type="match status" value="1"/>
</dbReference>
<dbReference type="SMART" id="SM01039">
    <property type="entry name" value="BRICHOS"/>
    <property type="match status" value="1"/>
</dbReference>
<dbReference type="PROSITE" id="PS50869">
    <property type="entry name" value="BRICHOS"/>
    <property type="match status" value="1"/>
</dbReference>
<comment type="function">
    <text evidence="1">Negative regulator of amyloid-beta peptide production. May inhibit the processing of APP by blocking its access to alpha- and beta-secretase. Binding to the beta-secretase-cleaved APP C-terminal fragment is negligible, suggesting that ITM2C is a poor gamma-secretase cleavage inhibitor. May play a role in TNF-induced cell death and neuronal differentiation (By similarity).</text>
</comment>
<comment type="subunit">
    <text evidence="1">Interacts with BACE1. Interacts with APP. Interacts with STMN2 (By similarity).</text>
</comment>
<comment type="subcellular location">
    <subcellularLocation>
        <location evidence="1">Lysosome membrane</location>
        <topology evidence="1">Single-pass type II membrane protein</topology>
    </subcellularLocation>
    <subcellularLocation>
        <location evidence="1">Cell membrane</location>
        <topology evidence="1">Single-pass type II membrane protein</topology>
    </subcellularLocation>
</comment>
<comment type="PTM">
    <text evidence="1">Type I membrane-bound, as well as soluble, furin has a pre-eminent role in ITM2C proteolytic processing. PCSK7 and PCSK5 may also be involved although to a lesser extent. The soluble form of PCSK7 is incapable of processing ITM2C. Fails to undergo shedding by ADAM10 and intramembrane cleavage by SPPL2B (By similarity).</text>
</comment>
<comment type="similarity">
    <text evidence="5">Belongs to the ITM2 family.</text>
</comment>
<keyword id="KW-1003">Cell membrane</keyword>
<keyword id="KW-0165">Cleavage on pair of basic residues</keyword>
<keyword id="KW-1015">Disulfide bond</keyword>
<keyword id="KW-0325">Glycoprotein</keyword>
<keyword id="KW-0458">Lysosome</keyword>
<keyword id="KW-0472">Membrane</keyword>
<keyword id="KW-0597">Phosphoprotein</keyword>
<keyword id="KW-1185">Reference proteome</keyword>
<keyword id="KW-0735">Signal-anchor</keyword>
<keyword id="KW-0812">Transmembrane</keyword>
<keyword id="KW-1133">Transmembrane helix</keyword>
<feature type="chain" id="PRO_0000232649" description="Integral membrane protein 2C">
    <location>
        <begin position="1"/>
        <end position="267"/>
    </location>
</feature>
<feature type="peptide" id="PRO_0000232650" description="CT-BRI3">
    <location>
        <begin position="243"/>
        <end position="267"/>
    </location>
</feature>
<feature type="transmembrane region" description="Helical; Signal-anchor for type II membrane protein" evidence="3">
    <location>
        <begin position="55"/>
        <end position="75"/>
    </location>
</feature>
<feature type="domain" description="BRICHOS" evidence="4">
    <location>
        <begin position="136"/>
        <end position="230"/>
    </location>
</feature>
<feature type="site" description="Cleavage; by furin" evidence="1">
    <location>
        <begin position="242"/>
        <end position="243"/>
    </location>
</feature>
<feature type="modified residue" description="Phosphothreonine" evidence="2">
    <location>
        <position position="37"/>
    </location>
</feature>
<feature type="glycosylation site" description="N-linked (GlcNAc...) asparagine" evidence="3">
    <location>
        <position position="169"/>
    </location>
</feature>
<feature type="disulfide bond" evidence="1">
    <location>
        <begin position="163"/>
        <end position="222"/>
    </location>
</feature>
<reference key="1">
    <citation type="submission" date="2005-06" db="EMBL/GenBank/DDBJ databases">
        <title>DNA sequences of macaque genes expressed in brain or testis and its evolutionary implications.</title>
        <authorList>
            <consortium name="International consortium for macaque cDNA sequencing and analysis"/>
        </authorList>
    </citation>
    <scope>NUCLEOTIDE SEQUENCE [LARGE SCALE MRNA]</scope>
    <source>
        <tissue>Brain cortex</tissue>
    </source>
</reference>
<gene>
    <name type="primary">ITM2C</name>
    <name type="ORF">QccE-20095</name>
</gene>
<sequence>MVKISFQPAVAGVKGDKADKASASAPAPASATEILLTPAREEQPPQHRSKRGGSVGGVCYLSMGMVVLLMGLVFASVYIYRYFFLAQLARDNFFRCGVLYEDSLSSQVRTQMELEEDVKIYLDENYERINVPVPQFGGGDPADIIHDFQRGLTAYHDISLDKCYVIELNTTIVLPPRNFWELLMNVKRGTYLPQTYIIQEEMVDTEHVSDKEALGSFIYHLCNGKDTYRLRRRATRRRINKRGAKNCNAIRHFENTFVVETLICGVV</sequence>
<name>ITM2C_MACFA</name>
<protein>
    <recommendedName>
        <fullName>Integral membrane protein 2C</fullName>
    </recommendedName>
    <component>
        <recommendedName>
            <fullName>CT-BRI3</fullName>
        </recommendedName>
    </component>
</protein>
<proteinExistence type="evidence at transcript level"/>
<accession>Q4R540</accession>
<evidence type="ECO:0000250" key="1"/>
<evidence type="ECO:0000250" key="2">
    <source>
        <dbReference type="UniProtKB" id="Q5PQL7"/>
    </source>
</evidence>
<evidence type="ECO:0000255" key="3"/>
<evidence type="ECO:0000255" key="4">
    <source>
        <dbReference type="PROSITE-ProRule" id="PRU00255"/>
    </source>
</evidence>
<evidence type="ECO:0000305" key="5"/>
<organism>
    <name type="scientific">Macaca fascicularis</name>
    <name type="common">Crab-eating macaque</name>
    <name type="synonym">Cynomolgus monkey</name>
    <dbReference type="NCBI Taxonomy" id="9541"/>
    <lineage>
        <taxon>Eukaryota</taxon>
        <taxon>Metazoa</taxon>
        <taxon>Chordata</taxon>
        <taxon>Craniata</taxon>
        <taxon>Vertebrata</taxon>
        <taxon>Euteleostomi</taxon>
        <taxon>Mammalia</taxon>
        <taxon>Eutheria</taxon>
        <taxon>Euarchontoglires</taxon>
        <taxon>Primates</taxon>
        <taxon>Haplorrhini</taxon>
        <taxon>Catarrhini</taxon>
        <taxon>Cercopithecidae</taxon>
        <taxon>Cercopithecinae</taxon>
        <taxon>Macaca</taxon>
    </lineage>
</organism>